<accession>Q03459</accession>
<proteinExistence type="evidence at transcript level"/>
<keyword id="KW-0007">Acetylation</keyword>
<keyword id="KW-0349">Heme</keyword>
<keyword id="KW-0408">Iron</keyword>
<keyword id="KW-0479">Metal-binding</keyword>
<keyword id="KW-0561">Oxygen transport</keyword>
<keyword id="KW-0813">Transport</keyword>
<dbReference type="EMBL" id="D13919">
    <property type="protein sequence ID" value="BAA03014.1"/>
    <property type="molecule type" value="mRNA"/>
</dbReference>
<dbReference type="PIR" id="S32556">
    <property type="entry name" value="S32556"/>
</dbReference>
<dbReference type="SMR" id="Q03459"/>
<dbReference type="GO" id="GO:0020037">
    <property type="term" value="F:heme binding"/>
    <property type="evidence" value="ECO:0007669"/>
    <property type="project" value="InterPro"/>
</dbReference>
<dbReference type="GO" id="GO:0046872">
    <property type="term" value="F:metal ion binding"/>
    <property type="evidence" value="ECO:0007669"/>
    <property type="project" value="UniProtKB-KW"/>
</dbReference>
<dbReference type="GO" id="GO:0019825">
    <property type="term" value="F:oxygen binding"/>
    <property type="evidence" value="ECO:0007669"/>
    <property type="project" value="InterPro"/>
</dbReference>
<dbReference type="GO" id="GO:0005344">
    <property type="term" value="F:oxygen carrier activity"/>
    <property type="evidence" value="ECO:0007669"/>
    <property type="project" value="UniProtKB-KW"/>
</dbReference>
<dbReference type="CDD" id="cd00454">
    <property type="entry name" value="TrHb1_N"/>
    <property type="match status" value="1"/>
</dbReference>
<dbReference type="Gene3D" id="1.10.490.10">
    <property type="entry name" value="Globins"/>
    <property type="match status" value="1"/>
</dbReference>
<dbReference type="InterPro" id="IPR009050">
    <property type="entry name" value="Globin-like_sf"/>
</dbReference>
<dbReference type="InterPro" id="IPR012292">
    <property type="entry name" value="Globin/Proto"/>
</dbReference>
<dbReference type="InterPro" id="IPR019795">
    <property type="entry name" value="Globin_bac-like_CS"/>
</dbReference>
<dbReference type="InterPro" id="IPR001486">
    <property type="entry name" value="Hemoglobin_trunc"/>
</dbReference>
<dbReference type="InterPro" id="IPR016339">
    <property type="entry name" value="Hemoglobin_trunc_I"/>
</dbReference>
<dbReference type="Pfam" id="PF01152">
    <property type="entry name" value="Bac_globin"/>
    <property type="match status" value="1"/>
</dbReference>
<dbReference type="PIRSF" id="PIRSF002030">
    <property type="entry name" value="Globin_Protozoa/Cyanobacteria"/>
    <property type="match status" value="1"/>
</dbReference>
<dbReference type="SUPFAM" id="SSF46458">
    <property type="entry name" value="Globin-like"/>
    <property type="match status" value="1"/>
</dbReference>
<dbReference type="PROSITE" id="PS01213">
    <property type="entry name" value="GLOBIN_FAM_2"/>
    <property type="match status" value="1"/>
</dbReference>
<feature type="chain" id="PRO_0000162650" description="Group 1 truncated hemoglobin">
    <location>
        <begin position="1"/>
        <end position="121"/>
    </location>
</feature>
<feature type="binding site" description="proximal binding residue" evidence="3">
    <location>
        <position position="73"/>
    </location>
    <ligand>
        <name>heme</name>
        <dbReference type="ChEBI" id="CHEBI:30413"/>
    </ligand>
    <ligandPart>
        <name>Fe</name>
        <dbReference type="ChEBI" id="CHEBI:18248"/>
    </ligandPart>
</feature>
<feature type="modified residue" description="N-acetylmethionine" evidence="2">
    <location>
        <position position="1"/>
    </location>
</feature>
<name>TRHBN_TETTH</name>
<comment type="cofactor">
    <cofactor evidence="1">
        <name>heme</name>
        <dbReference type="ChEBI" id="CHEBI:30413"/>
    </cofactor>
    <text evidence="1">Binds 1 heme group per subunit.</text>
</comment>
<comment type="subunit">
    <text evidence="1">Monomer.</text>
</comment>
<comment type="similarity">
    <text evidence="4">Belongs to the truncated hemoglobin family. Group I subfamily.</text>
</comment>
<reference key="1">
    <citation type="journal article" date="1993" name="Biochim. Biophys. Acta">
        <title>Primary structure of Tetrahymena hemoglobins.</title>
        <authorList>
            <person name="Takagi T."/>
            <person name="Iwaasa H."/>
            <person name="Yuasa H."/>
            <person name="Shikama K."/>
            <person name="Takemasa T."/>
            <person name="Watanabe Y."/>
        </authorList>
    </citation>
    <scope>NUCLEOTIDE SEQUENCE [MRNA]</scope>
</reference>
<sequence>MRKQPTVFEKLGGQAAMHAAVPLFYKKVLADDRVKHYFKNTNMEHQAKQQEDFLTMLLGGPNHYKGKNMAEAHKGMNLQNSHFDAIIENLAATLKELGVSDQIIGEAAKVIEHTRKDCLGK</sequence>
<protein>
    <recommendedName>
        <fullName>Group 1 truncated hemoglobin</fullName>
        <shortName>Truncated Hb</shortName>
    </recommendedName>
    <alternativeName>
        <fullName>Hemoglobin</fullName>
    </alternativeName>
    <alternativeName>
        <fullName>Myoglobin</fullName>
    </alternativeName>
</protein>
<organism>
    <name type="scientific">Tetrahymena thermophila</name>
    <dbReference type="NCBI Taxonomy" id="5911"/>
    <lineage>
        <taxon>Eukaryota</taxon>
        <taxon>Sar</taxon>
        <taxon>Alveolata</taxon>
        <taxon>Ciliophora</taxon>
        <taxon>Intramacronucleata</taxon>
        <taxon>Oligohymenophorea</taxon>
        <taxon>Hymenostomatida</taxon>
        <taxon>Tetrahymenina</taxon>
        <taxon>Tetrahymenidae</taxon>
        <taxon>Tetrahymena</taxon>
    </lineage>
</organism>
<evidence type="ECO:0000250" key="1"/>
<evidence type="ECO:0000250" key="2">
    <source>
        <dbReference type="UniProtKB" id="P17724"/>
    </source>
</evidence>
<evidence type="ECO:0000255" key="3"/>
<evidence type="ECO:0000305" key="4"/>